<proteinExistence type="predicted"/>
<organism>
    <name type="scientific">Mycobacterium bovis (strain ATCC BAA-935 / AF2122/97)</name>
    <dbReference type="NCBI Taxonomy" id="233413"/>
    <lineage>
        <taxon>Bacteria</taxon>
        <taxon>Bacillati</taxon>
        <taxon>Actinomycetota</taxon>
        <taxon>Actinomycetes</taxon>
        <taxon>Mycobacteriales</taxon>
        <taxon>Mycobacteriaceae</taxon>
        <taxon>Mycobacterium</taxon>
        <taxon>Mycobacterium tuberculosis complex</taxon>
    </lineage>
</organism>
<protein>
    <recommendedName>
        <fullName>Uncharacterized protein Mb1356</fullName>
    </recommendedName>
</protein>
<sequence length="98" mass="11334">MARRRKPLHRQRPEPPSWALRRVEAGPDGHEYEVRPVAAARAVKTYRCPGCDHEIRSGTAHVVVWPTDLPQAGVDDRRHWHTPCWANRATRGPTRKWT</sequence>
<reference key="1">
    <citation type="journal article" date="2003" name="Proc. Natl. Acad. Sci. U.S.A.">
        <title>The complete genome sequence of Mycobacterium bovis.</title>
        <authorList>
            <person name="Garnier T."/>
            <person name="Eiglmeier K."/>
            <person name="Camus J.-C."/>
            <person name="Medina N."/>
            <person name="Mansoor H."/>
            <person name="Pryor M."/>
            <person name="Duthoy S."/>
            <person name="Grondin S."/>
            <person name="Lacroix C."/>
            <person name="Monsempe C."/>
            <person name="Simon S."/>
            <person name="Harris B."/>
            <person name="Atkin R."/>
            <person name="Doggett J."/>
            <person name="Mayes R."/>
            <person name="Keating L."/>
            <person name="Wheeler P.R."/>
            <person name="Parkhill J."/>
            <person name="Barrell B.G."/>
            <person name="Cole S.T."/>
            <person name="Gordon S.V."/>
            <person name="Hewinson R.G."/>
        </authorList>
    </citation>
    <scope>NUCLEOTIDE SEQUENCE [LARGE SCALE GENOMIC DNA]</scope>
    <source>
        <strain>ATCC BAA-935 / AF2122/97</strain>
    </source>
</reference>
<reference key="2">
    <citation type="journal article" date="2017" name="Genome Announc.">
        <title>Updated reference genome sequence and annotation of Mycobacterium bovis AF2122/97.</title>
        <authorList>
            <person name="Malone K.M."/>
            <person name="Farrell D."/>
            <person name="Stuber T.P."/>
            <person name="Schubert O.T."/>
            <person name="Aebersold R."/>
            <person name="Robbe-Austerman S."/>
            <person name="Gordon S.V."/>
        </authorList>
    </citation>
    <scope>NUCLEOTIDE SEQUENCE [LARGE SCALE GENOMIC DNA]</scope>
    <scope>GENOME REANNOTATION</scope>
    <source>
        <strain>ATCC BAA-935 / AF2122/97</strain>
    </source>
</reference>
<feature type="chain" id="PRO_0000103803" description="Uncharacterized protein Mb1356">
    <location>
        <begin position="1"/>
        <end position="98"/>
    </location>
</feature>
<feature type="region of interest" description="Disordered" evidence="1">
    <location>
        <begin position="1"/>
        <end position="21"/>
    </location>
</feature>
<feature type="compositionally biased region" description="Basic residues" evidence="1">
    <location>
        <begin position="1"/>
        <end position="10"/>
    </location>
</feature>
<accession>P64806</accession>
<accession>A0A1R3XY00</accession>
<accession>Q10635</accession>
<accession>X2BHR5</accession>
<keyword id="KW-1185">Reference proteome</keyword>
<dbReference type="EMBL" id="LT708304">
    <property type="protein sequence ID" value="SIT99959.1"/>
    <property type="molecule type" value="Genomic_DNA"/>
</dbReference>
<dbReference type="RefSeq" id="NP_855010.1">
    <property type="nucleotide sequence ID" value="NC_002945.3"/>
</dbReference>
<dbReference type="RefSeq" id="WP_003898823.1">
    <property type="nucleotide sequence ID" value="NC_002945.4"/>
</dbReference>
<dbReference type="KEGG" id="mbo:BQ2027_MB1356"/>
<dbReference type="PATRIC" id="fig|233413.5.peg.1486"/>
<dbReference type="Proteomes" id="UP000001419">
    <property type="component" value="Chromosome"/>
</dbReference>
<name>Y1356_MYCBO</name>
<gene>
    <name type="ordered locus">BQ2027_MB1356</name>
</gene>
<evidence type="ECO:0000256" key="1">
    <source>
        <dbReference type="SAM" id="MobiDB-lite"/>
    </source>
</evidence>